<reference key="1">
    <citation type="journal article" date="2003" name="Proc. Natl. Acad. Sci. U.S.A.">
        <title>The complete genome sequence of the carcinogenic bacterium Helicobacter hepaticus.</title>
        <authorList>
            <person name="Suerbaum S."/>
            <person name="Josenhans C."/>
            <person name="Sterzenbach T."/>
            <person name="Drescher B."/>
            <person name="Brandt P."/>
            <person name="Bell M."/>
            <person name="Droege M."/>
            <person name="Fartmann B."/>
            <person name="Fischer H.-P."/>
            <person name="Ge Z."/>
            <person name="Hoerster A."/>
            <person name="Holland R."/>
            <person name="Klein K."/>
            <person name="Koenig J."/>
            <person name="Macko L."/>
            <person name="Mendz G.L."/>
            <person name="Nyakatura G."/>
            <person name="Schauer D.B."/>
            <person name="Shen Z."/>
            <person name="Weber J."/>
            <person name="Frosch M."/>
            <person name="Fox J.G."/>
        </authorList>
    </citation>
    <scope>NUCLEOTIDE SEQUENCE [LARGE SCALE GENOMIC DNA]</scope>
    <source>
        <strain>ATCC 51449 / 3B1</strain>
    </source>
</reference>
<gene>
    <name type="ordered locus">HH_1604</name>
</gene>
<evidence type="ECO:0000255" key="1">
    <source>
        <dbReference type="HAMAP-Rule" id="MF_00693"/>
    </source>
</evidence>
<evidence type="ECO:0000305" key="2"/>
<feature type="chain" id="PRO_0000175819" description="Probable transcriptional regulatory protein HH_1604">
    <location>
        <begin position="1"/>
        <end position="238"/>
    </location>
</feature>
<name>Y1604_HELHP</name>
<sequence>MGRAFEYRRAAKEKRWDKMSKVFPKLAKAITVAAKEGGGDPAMNAKLRTAIANAKAQNMPKDNIDAAIKRASGKDGIFSEITYEGKAAYGVLIFIECTTDNPTRTIANIKSYFNKTPNASILTNGSIEFMFARKSAFEFRTDKNIEELELALIDYGLEELESRESEEGIYHIAYGDYKDFGRLSEGFEHLNIPISKAALQRIPTSPISLSETQMQDIEKLLDKIEDDDDVQAVYTNIE</sequence>
<organism>
    <name type="scientific">Helicobacter hepaticus (strain ATCC 51449 / 3B1)</name>
    <dbReference type="NCBI Taxonomy" id="235279"/>
    <lineage>
        <taxon>Bacteria</taxon>
        <taxon>Pseudomonadati</taxon>
        <taxon>Campylobacterota</taxon>
        <taxon>Epsilonproteobacteria</taxon>
        <taxon>Campylobacterales</taxon>
        <taxon>Helicobacteraceae</taxon>
        <taxon>Helicobacter</taxon>
    </lineage>
</organism>
<keyword id="KW-0963">Cytoplasm</keyword>
<keyword id="KW-0238">DNA-binding</keyword>
<keyword id="KW-1185">Reference proteome</keyword>
<keyword id="KW-0804">Transcription</keyword>
<keyword id="KW-0805">Transcription regulation</keyword>
<comment type="subcellular location">
    <subcellularLocation>
        <location evidence="1">Cytoplasm</location>
    </subcellularLocation>
</comment>
<comment type="similarity">
    <text evidence="1">Belongs to the TACO1 family.</text>
</comment>
<comment type="sequence caution" evidence="2">
    <conflict type="erroneous initiation">
        <sequence resource="EMBL-CDS" id="AAP78201"/>
    </conflict>
</comment>
<protein>
    <recommendedName>
        <fullName evidence="1">Probable transcriptional regulatory protein HH_1604</fullName>
    </recommendedName>
</protein>
<dbReference type="EMBL" id="AE017125">
    <property type="protein sequence ID" value="AAP78201.1"/>
    <property type="status" value="ALT_INIT"/>
    <property type="molecule type" value="Genomic_DNA"/>
</dbReference>
<dbReference type="RefSeq" id="WP_011116444.1">
    <property type="nucleotide sequence ID" value="NC_004917.1"/>
</dbReference>
<dbReference type="SMR" id="Q7VFS1"/>
<dbReference type="STRING" id="235279.HH_1604"/>
<dbReference type="KEGG" id="hhe:HH_1604"/>
<dbReference type="eggNOG" id="COG0217">
    <property type="taxonomic scope" value="Bacteria"/>
</dbReference>
<dbReference type="HOGENOM" id="CLU_062974_2_2_7"/>
<dbReference type="OrthoDB" id="9781053at2"/>
<dbReference type="Proteomes" id="UP000002495">
    <property type="component" value="Chromosome"/>
</dbReference>
<dbReference type="GO" id="GO:0005829">
    <property type="term" value="C:cytosol"/>
    <property type="evidence" value="ECO:0007669"/>
    <property type="project" value="TreeGrafter"/>
</dbReference>
<dbReference type="GO" id="GO:0003677">
    <property type="term" value="F:DNA binding"/>
    <property type="evidence" value="ECO:0007669"/>
    <property type="project" value="UniProtKB-UniRule"/>
</dbReference>
<dbReference type="GO" id="GO:0006355">
    <property type="term" value="P:regulation of DNA-templated transcription"/>
    <property type="evidence" value="ECO:0007669"/>
    <property type="project" value="UniProtKB-UniRule"/>
</dbReference>
<dbReference type="FunFam" id="1.10.10.200:FF:000004">
    <property type="entry name" value="Probable transcriptional regulatory protein BSBG_02618"/>
    <property type="match status" value="1"/>
</dbReference>
<dbReference type="Gene3D" id="1.10.10.200">
    <property type="match status" value="1"/>
</dbReference>
<dbReference type="Gene3D" id="3.30.70.980">
    <property type="match status" value="2"/>
</dbReference>
<dbReference type="HAMAP" id="MF_00693">
    <property type="entry name" value="Transcrip_reg_TACO1"/>
    <property type="match status" value="1"/>
</dbReference>
<dbReference type="InterPro" id="IPR017856">
    <property type="entry name" value="Integrase-like_N"/>
</dbReference>
<dbReference type="InterPro" id="IPR048300">
    <property type="entry name" value="TACO1_YebC-like_2nd/3rd_dom"/>
</dbReference>
<dbReference type="InterPro" id="IPR049083">
    <property type="entry name" value="TACO1_YebC_N"/>
</dbReference>
<dbReference type="InterPro" id="IPR002876">
    <property type="entry name" value="Transcrip_reg_TACO1-like"/>
</dbReference>
<dbReference type="InterPro" id="IPR026564">
    <property type="entry name" value="Transcrip_reg_TACO1-like_dom3"/>
</dbReference>
<dbReference type="InterPro" id="IPR029072">
    <property type="entry name" value="YebC-like"/>
</dbReference>
<dbReference type="NCBIfam" id="NF009044">
    <property type="entry name" value="PRK12378.1"/>
    <property type="match status" value="1"/>
</dbReference>
<dbReference type="NCBIfam" id="TIGR01033">
    <property type="entry name" value="YebC/PmpR family DNA-binding transcriptional regulator"/>
    <property type="match status" value="1"/>
</dbReference>
<dbReference type="PANTHER" id="PTHR12532:SF6">
    <property type="entry name" value="TRANSCRIPTIONAL REGULATORY PROTEIN YEBC-RELATED"/>
    <property type="match status" value="1"/>
</dbReference>
<dbReference type="PANTHER" id="PTHR12532">
    <property type="entry name" value="TRANSLATIONAL ACTIVATOR OF CYTOCHROME C OXIDASE 1"/>
    <property type="match status" value="1"/>
</dbReference>
<dbReference type="Pfam" id="PF20772">
    <property type="entry name" value="TACO1_YebC_N"/>
    <property type="match status" value="1"/>
</dbReference>
<dbReference type="Pfam" id="PF01709">
    <property type="entry name" value="Transcrip_reg"/>
    <property type="match status" value="1"/>
</dbReference>
<dbReference type="SUPFAM" id="SSF75625">
    <property type="entry name" value="YebC-like"/>
    <property type="match status" value="1"/>
</dbReference>
<proteinExistence type="inferred from homology"/>
<accession>Q7VFS1</accession>